<accession>Q83CG2</accession>
<proteinExistence type="inferred from homology"/>
<comment type="function">
    <text evidence="1">The alpha subunit is responsible for the aldol cleavage of indoleglycerol phosphate to indole and glyceraldehyde 3-phosphate.</text>
</comment>
<comment type="catalytic activity">
    <reaction evidence="1">
        <text>(1S,2R)-1-C-(indol-3-yl)glycerol 3-phosphate + L-serine = D-glyceraldehyde 3-phosphate + L-tryptophan + H2O</text>
        <dbReference type="Rhea" id="RHEA:10532"/>
        <dbReference type="ChEBI" id="CHEBI:15377"/>
        <dbReference type="ChEBI" id="CHEBI:33384"/>
        <dbReference type="ChEBI" id="CHEBI:57912"/>
        <dbReference type="ChEBI" id="CHEBI:58866"/>
        <dbReference type="ChEBI" id="CHEBI:59776"/>
        <dbReference type="EC" id="4.2.1.20"/>
    </reaction>
</comment>
<comment type="pathway">
    <text evidence="1">Amino-acid biosynthesis; L-tryptophan biosynthesis; L-tryptophan from chorismate: step 5/5.</text>
</comment>
<comment type="subunit">
    <text evidence="1">Tetramer of two alpha and two beta chains.</text>
</comment>
<comment type="similarity">
    <text evidence="1">Belongs to the TrpA family.</text>
</comment>
<dbReference type="EC" id="4.2.1.20" evidence="1"/>
<dbReference type="EMBL" id="AE016828">
    <property type="protein sequence ID" value="AAO90667.1"/>
    <property type="molecule type" value="Genomic_DNA"/>
</dbReference>
<dbReference type="RefSeq" id="NP_820153.1">
    <property type="nucleotide sequence ID" value="NC_002971.4"/>
</dbReference>
<dbReference type="RefSeq" id="WP_010958043.1">
    <property type="nucleotide sequence ID" value="NC_002971.4"/>
</dbReference>
<dbReference type="SMR" id="Q83CG2"/>
<dbReference type="STRING" id="227377.CBU_1156"/>
<dbReference type="EnsemblBacteria" id="AAO90667">
    <property type="protein sequence ID" value="AAO90667"/>
    <property type="gene ID" value="CBU_1156"/>
</dbReference>
<dbReference type="GeneID" id="1209058"/>
<dbReference type="KEGG" id="cbu:CBU_1156"/>
<dbReference type="PATRIC" id="fig|227377.7.peg.1153"/>
<dbReference type="eggNOG" id="COG0159">
    <property type="taxonomic scope" value="Bacteria"/>
</dbReference>
<dbReference type="HOGENOM" id="CLU_016734_0_0_6"/>
<dbReference type="OrthoDB" id="9804578at2"/>
<dbReference type="UniPathway" id="UPA00035">
    <property type="reaction ID" value="UER00044"/>
</dbReference>
<dbReference type="Proteomes" id="UP000002671">
    <property type="component" value="Chromosome"/>
</dbReference>
<dbReference type="GO" id="GO:0005829">
    <property type="term" value="C:cytosol"/>
    <property type="evidence" value="ECO:0000318"/>
    <property type="project" value="GO_Central"/>
</dbReference>
<dbReference type="GO" id="GO:0004834">
    <property type="term" value="F:tryptophan synthase activity"/>
    <property type="evidence" value="ECO:0000318"/>
    <property type="project" value="GO_Central"/>
</dbReference>
<dbReference type="GO" id="GO:0000162">
    <property type="term" value="P:L-tryptophan biosynthetic process"/>
    <property type="evidence" value="ECO:0000318"/>
    <property type="project" value="GO_Central"/>
</dbReference>
<dbReference type="CDD" id="cd04724">
    <property type="entry name" value="Tryptophan_synthase_alpha"/>
    <property type="match status" value="1"/>
</dbReference>
<dbReference type="FunFam" id="3.20.20.70:FF:000037">
    <property type="entry name" value="Tryptophan synthase alpha chain"/>
    <property type="match status" value="1"/>
</dbReference>
<dbReference type="Gene3D" id="3.20.20.70">
    <property type="entry name" value="Aldolase class I"/>
    <property type="match status" value="1"/>
</dbReference>
<dbReference type="HAMAP" id="MF_00131">
    <property type="entry name" value="Trp_synth_alpha"/>
    <property type="match status" value="1"/>
</dbReference>
<dbReference type="InterPro" id="IPR013785">
    <property type="entry name" value="Aldolase_TIM"/>
</dbReference>
<dbReference type="InterPro" id="IPR011060">
    <property type="entry name" value="RibuloseP-bd_barrel"/>
</dbReference>
<dbReference type="InterPro" id="IPR018204">
    <property type="entry name" value="Trp_synthase_alpha_AS"/>
</dbReference>
<dbReference type="InterPro" id="IPR002028">
    <property type="entry name" value="Trp_synthase_suA"/>
</dbReference>
<dbReference type="NCBIfam" id="TIGR00262">
    <property type="entry name" value="trpA"/>
    <property type="match status" value="1"/>
</dbReference>
<dbReference type="PANTHER" id="PTHR43406:SF1">
    <property type="entry name" value="TRYPTOPHAN SYNTHASE ALPHA CHAIN, CHLOROPLASTIC"/>
    <property type="match status" value="1"/>
</dbReference>
<dbReference type="PANTHER" id="PTHR43406">
    <property type="entry name" value="TRYPTOPHAN SYNTHASE, ALPHA CHAIN"/>
    <property type="match status" value="1"/>
</dbReference>
<dbReference type="Pfam" id="PF00290">
    <property type="entry name" value="Trp_syntA"/>
    <property type="match status" value="1"/>
</dbReference>
<dbReference type="SUPFAM" id="SSF51366">
    <property type="entry name" value="Ribulose-phoshate binding barrel"/>
    <property type="match status" value="1"/>
</dbReference>
<dbReference type="PROSITE" id="PS00167">
    <property type="entry name" value="TRP_SYNTHASE_ALPHA"/>
    <property type="match status" value="1"/>
</dbReference>
<gene>
    <name evidence="1" type="primary">trpA</name>
    <name type="ordered locus">CBU_1156</name>
</gene>
<reference key="1">
    <citation type="journal article" date="2003" name="Proc. Natl. Acad. Sci. U.S.A.">
        <title>Complete genome sequence of the Q-fever pathogen, Coxiella burnetii.</title>
        <authorList>
            <person name="Seshadri R."/>
            <person name="Paulsen I.T."/>
            <person name="Eisen J.A."/>
            <person name="Read T.D."/>
            <person name="Nelson K.E."/>
            <person name="Nelson W.C."/>
            <person name="Ward N.L."/>
            <person name="Tettelin H."/>
            <person name="Davidsen T.M."/>
            <person name="Beanan M.J."/>
            <person name="DeBoy R.T."/>
            <person name="Daugherty S.C."/>
            <person name="Brinkac L.M."/>
            <person name="Madupu R."/>
            <person name="Dodson R.J."/>
            <person name="Khouri H.M."/>
            <person name="Lee K.H."/>
            <person name="Carty H.A."/>
            <person name="Scanlan D."/>
            <person name="Heinzen R.A."/>
            <person name="Thompson H.A."/>
            <person name="Samuel J.E."/>
            <person name="Fraser C.M."/>
            <person name="Heidelberg J.F."/>
        </authorList>
    </citation>
    <scope>NUCLEOTIDE SEQUENCE [LARGE SCALE GENOMIC DNA]</scope>
    <source>
        <strain>RSA 493 / Nine Mile phase I</strain>
    </source>
</reference>
<protein>
    <recommendedName>
        <fullName evidence="1">Tryptophan synthase alpha chain</fullName>
        <ecNumber evidence="1">4.2.1.20</ecNumber>
    </recommendedName>
</protein>
<name>TRPA_COXBU</name>
<sequence length="267" mass="28924">MNRIEQQFKKSPAYVAYLTAGDGGLERSLESLLALAKGGVNILEVGVPFSDPVADGPVIQEASIRALAQGTTLHDVLTLITSFRQHSEIPIILFTYFNPLLAAGDKIYQQMKSAGVDGCLVVDLPVEEAAPHLTACKTAKIAPILLISPSTTQERLKKINEHGEGMLYYVCRPGTTGVRATLPENFPAKMNQIKSMTSLPIVTGFGIANRKMAAQALQYADGFVIGSLFVKAIAEGISKNALTRLAQSLNPHYPNLRLITPFRKKTF</sequence>
<evidence type="ECO:0000255" key="1">
    <source>
        <dbReference type="HAMAP-Rule" id="MF_00131"/>
    </source>
</evidence>
<feature type="chain" id="PRO_0000098774" description="Tryptophan synthase alpha chain">
    <location>
        <begin position="1"/>
        <end position="267"/>
    </location>
</feature>
<feature type="active site" description="Proton acceptor" evidence="1">
    <location>
        <position position="44"/>
    </location>
</feature>
<feature type="active site" description="Proton acceptor" evidence="1">
    <location>
        <position position="55"/>
    </location>
</feature>
<keyword id="KW-0028">Amino-acid biosynthesis</keyword>
<keyword id="KW-0057">Aromatic amino acid biosynthesis</keyword>
<keyword id="KW-0456">Lyase</keyword>
<keyword id="KW-1185">Reference proteome</keyword>
<keyword id="KW-0822">Tryptophan biosynthesis</keyword>
<organism>
    <name type="scientific">Coxiella burnetii (strain RSA 493 / Nine Mile phase I)</name>
    <dbReference type="NCBI Taxonomy" id="227377"/>
    <lineage>
        <taxon>Bacteria</taxon>
        <taxon>Pseudomonadati</taxon>
        <taxon>Pseudomonadota</taxon>
        <taxon>Gammaproteobacteria</taxon>
        <taxon>Legionellales</taxon>
        <taxon>Coxiellaceae</taxon>
        <taxon>Coxiella</taxon>
    </lineage>
</organism>